<reference key="1">
    <citation type="submission" date="1994-10" db="EMBL/GenBank/DDBJ databases">
        <authorList>
            <person name="Glaser P."/>
            <person name="Danchin A."/>
        </authorList>
    </citation>
    <scope>NUCLEOTIDE SEQUENCE [GENOMIC DNA]</scope>
    <source>
        <strain>168</strain>
    </source>
</reference>
<reference key="2">
    <citation type="journal article" date="1997" name="Nature">
        <title>The complete genome sequence of the Gram-positive bacterium Bacillus subtilis.</title>
        <authorList>
            <person name="Kunst F."/>
            <person name="Ogasawara N."/>
            <person name="Moszer I."/>
            <person name="Albertini A.M."/>
            <person name="Alloni G."/>
            <person name="Azevedo V."/>
            <person name="Bertero M.G."/>
            <person name="Bessieres P."/>
            <person name="Bolotin A."/>
            <person name="Borchert S."/>
            <person name="Borriss R."/>
            <person name="Boursier L."/>
            <person name="Brans A."/>
            <person name="Braun M."/>
            <person name="Brignell S.C."/>
            <person name="Bron S."/>
            <person name="Brouillet S."/>
            <person name="Bruschi C.V."/>
            <person name="Caldwell B."/>
            <person name="Capuano V."/>
            <person name="Carter N.M."/>
            <person name="Choi S.-K."/>
            <person name="Codani J.-J."/>
            <person name="Connerton I.F."/>
            <person name="Cummings N.J."/>
            <person name="Daniel R.A."/>
            <person name="Denizot F."/>
            <person name="Devine K.M."/>
            <person name="Duesterhoeft A."/>
            <person name="Ehrlich S.D."/>
            <person name="Emmerson P.T."/>
            <person name="Entian K.-D."/>
            <person name="Errington J."/>
            <person name="Fabret C."/>
            <person name="Ferrari E."/>
            <person name="Foulger D."/>
            <person name="Fritz C."/>
            <person name="Fujita M."/>
            <person name="Fujita Y."/>
            <person name="Fuma S."/>
            <person name="Galizzi A."/>
            <person name="Galleron N."/>
            <person name="Ghim S.-Y."/>
            <person name="Glaser P."/>
            <person name="Goffeau A."/>
            <person name="Golightly E.J."/>
            <person name="Grandi G."/>
            <person name="Guiseppi G."/>
            <person name="Guy B.J."/>
            <person name="Haga K."/>
            <person name="Haiech J."/>
            <person name="Harwood C.R."/>
            <person name="Henaut A."/>
            <person name="Hilbert H."/>
            <person name="Holsappel S."/>
            <person name="Hosono S."/>
            <person name="Hullo M.-F."/>
            <person name="Itaya M."/>
            <person name="Jones L.-M."/>
            <person name="Joris B."/>
            <person name="Karamata D."/>
            <person name="Kasahara Y."/>
            <person name="Klaerr-Blanchard M."/>
            <person name="Klein C."/>
            <person name="Kobayashi Y."/>
            <person name="Koetter P."/>
            <person name="Koningstein G."/>
            <person name="Krogh S."/>
            <person name="Kumano M."/>
            <person name="Kurita K."/>
            <person name="Lapidus A."/>
            <person name="Lardinois S."/>
            <person name="Lauber J."/>
            <person name="Lazarevic V."/>
            <person name="Lee S.-M."/>
            <person name="Levine A."/>
            <person name="Liu H."/>
            <person name="Masuda S."/>
            <person name="Mauel C."/>
            <person name="Medigue C."/>
            <person name="Medina N."/>
            <person name="Mellado R.P."/>
            <person name="Mizuno M."/>
            <person name="Moestl D."/>
            <person name="Nakai S."/>
            <person name="Noback M."/>
            <person name="Noone D."/>
            <person name="O'Reilly M."/>
            <person name="Ogawa K."/>
            <person name="Ogiwara A."/>
            <person name="Oudega B."/>
            <person name="Park S.-H."/>
            <person name="Parro V."/>
            <person name="Pohl T.M."/>
            <person name="Portetelle D."/>
            <person name="Porwollik S."/>
            <person name="Prescott A.M."/>
            <person name="Presecan E."/>
            <person name="Pujic P."/>
            <person name="Purnelle B."/>
            <person name="Rapoport G."/>
            <person name="Rey M."/>
            <person name="Reynolds S."/>
            <person name="Rieger M."/>
            <person name="Rivolta C."/>
            <person name="Rocha E."/>
            <person name="Roche B."/>
            <person name="Rose M."/>
            <person name="Sadaie Y."/>
            <person name="Sato T."/>
            <person name="Scanlan E."/>
            <person name="Schleich S."/>
            <person name="Schroeter R."/>
            <person name="Scoffone F."/>
            <person name="Sekiguchi J."/>
            <person name="Sekowska A."/>
            <person name="Seror S.J."/>
            <person name="Serror P."/>
            <person name="Shin B.-S."/>
            <person name="Soldo B."/>
            <person name="Sorokin A."/>
            <person name="Tacconi E."/>
            <person name="Takagi T."/>
            <person name="Takahashi H."/>
            <person name="Takemaru K."/>
            <person name="Takeuchi M."/>
            <person name="Tamakoshi A."/>
            <person name="Tanaka T."/>
            <person name="Terpstra P."/>
            <person name="Tognoni A."/>
            <person name="Tosato V."/>
            <person name="Uchiyama S."/>
            <person name="Vandenbol M."/>
            <person name="Vannier F."/>
            <person name="Vassarotti A."/>
            <person name="Viari A."/>
            <person name="Wambutt R."/>
            <person name="Wedler E."/>
            <person name="Wedler H."/>
            <person name="Weitzenegger T."/>
            <person name="Winters P."/>
            <person name="Wipat A."/>
            <person name="Yamamoto H."/>
            <person name="Yamane K."/>
            <person name="Yasumoto K."/>
            <person name="Yata K."/>
            <person name="Yoshida K."/>
            <person name="Yoshikawa H.-F."/>
            <person name="Zumstein E."/>
            <person name="Yoshikawa H."/>
            <person name="Danchin A."/>
        </authorList>
    </citation>
    <scope>NUCLEOTIDE SEQUENCE [LARGE SCALE GENOMIC DNA]</scope>
    <source>
        <strain>168</strain>
    </source>
</reference>
<reference key="3">
    <citation type="journal article" date="2002" name="Biochemistry">
        <title>Different unfolding pathways for mesophilic and thermophilic homologues of serine hydroxymethyltransferase.</title>
        <authorList>
            <person name="Bhatt A.N."/>
            <person name="Prakash K."/>
            <person name="Subramanya H.S."/>
            <person name="Bhakuni V."/>
        </authorList>
    </citation>
    <scope>SUBUNIT</scope>
    <scope>COFACTOR</scope>
</reference>
<reference key="4">
    <citation type="journal article" date="2008" name="J. Biochem.">
        <title>Characterization of pyridoxal 5'-phosphate-binding domain and folding intermediate of Bacillus subtilis serine hydroxymethyltransferase: an autonomous folding domain.</title>
        <authorList>
            <person name="Bhatt A.N."/>
            <person name="Bhakuni V."/>
        </authorList>
    </citation>
    <scope>STUDY OF THE PLP-BINDING DOMAIN</scope>
    <scope>COFACTOR</scope>
    <scope>DOMAIN</scope>
</reference>
<keyword id="KW-0028">Amino-acid biosynthesis</keyword>
<keyword id="KW-0963">Cytoplasm</keyword>
<keyword id="KW-0554">One-carbon metabolism</keyword>
<keyword id="KW-0663">Pyridoxal phosphate</keyword>
<keyword id="KW-1185">Reference proteome</keyword>
<keyword id="KW-0808">Transferase</keyword>
<organism>
    <name type="scientific">Bacillus subtilis (strain 168)</name>
    <dbReference type="NCBI Taxonomy" id="224308"/>
    <lineage>
        <taxon>Bacteria</taxon>
        <taxon>Bacillati</taxon>
        <taxon>Bacillota</taxon>
        <taxon>Bacilli</taxon>
        <taxon>Bacillales</taxon>
        <taxon>Bacillaceae</taxon>
        <taxon>Bacillus</taxon>
    </lineage>
</organism>
<comment type="function">
    <text evidence="1">Catalyzes the reversible interconversion of serine and glycine with tetrahydrofolate (THF) serving as the one-carbon carrier. This reaction serves as the major source of one-carbon groups required for the biosynthesis of purines, thymidylate, methionine, and other important biomolecules. Also exhibits THF-independent aldolase activity toward beta-hydroxyamino acids, producing glycine and aldehydes, via a retro-aldol mechanism.</text>
</comment>
<comment type="catalytic activity">
    <reaction evidence="1">
        <text>(6R)-5,10-methylene-5,6,7,8-tetrahydrofolate + glycine + H2O = (6S)-5,6,7,8-tetrahydrofolate + L-serine</text>
        <dbReference type="Rhea" id="RHEA:15481"/>
        <dbReference type="ChEBI" id="CHEBI:15377"/>
        <dbReference type="ChEBI" id="CHEBI:15636"/>
        <dbReference type="ChEBI" id="CHEBI:33384"/>
        <dbReference type="ChEBI" id="CHEBI:57305"/>
        <dbReference type="ChEBI" id="CHEBI:57453"/>
        <dbReference type="EC" id="2.1.2.1"/>
    </reaction>
</comment>
<comment type="cofactor">
    <cofactor evidence="1 2 3">
        <name>pyridoxal 5'-phosphate</name>
        <dbReference type="ChEBI" id="CHEBI:597326"/>
    </cofactor>
</comment>
<comment type="pathway">
    <text evidence="1">One-carbon metabolism; tetrahydrofolate interconversion.</text>
</comment>
<comment type="pathway">
    <text evidence="1">Amino-acid biosynthesis; glycine biosynthesis; glycine from L-serine: step 1/1.</text>
</comment>
<comment type="subunit">
    <text evidence="1 2">Homodimer.</text>
</comment>
<comment type="subcellular location">
    <subcellularLocation>
        <location evidence="1">Cytoplasm</location>
    </subcellularLocation>
</comment>
<comment type="domain">
    <text evidence="3">Folds into two domains, a large PLP-binding domain (residues 63-276) and a small C-terminal domain.</text>
</comment>
<comment type="similarity">
    <text evidence="1 4">Belongs to the SHMT family.</text>
</comment>
<evidence type="ECO:0000255" key="1">
    <source>
        <dbReference type="HAMAP-Rule" id="MF_00051"/>
    </source>
</evidence>
<evidence type="ECO:0000269" key="2">
    <source>
    </source>
</evidence>
<evidence type="ECO:0000269" key="3">
    <source>
    </source>
</evidence>
<evidence type="ECO:0000305" key="4"/>
<name>GLYA_BACSU</name>
<dbReference type="EC" id="2.1.2.1" evidence="1"/>
<dbReference type="EMBL" id="Z38002">
    <property type="protein sequence ID" value="CAA86110.1"/>
    <property type="molecule type" value="Genomic_DNA"/>
</dbReference>
<dbReference type="EMBL" id="AL009126">
    <property type="protein sequence ID" value="CAB15707.1"/>
    <property type="molecule type" value="Genomic_DNA"/>
</dbReference>
<dbReference type="PIR" id="I40483">
    <property type="entry name" value="I40483"/>
</dbReference>
<dbReference type="RefSeq" id="NP_391571.1">
    <property type="nucleotide sequence ID" value="NC_000964.3"/>
</dbReference>
<dbReference type="RefSeq" id="WP_003227669.1">
    <property type="nucleotide sequence ID" value="NZ_OZ025638.1"/>
</dbReference>
<dbReference type="SMR" id="P39148"/>
<dbReference type="FunCoup" id="P39148">
    <property type="interactions" value="745"/>
</dbReference>
<dbReference type="IntAct" id="P39148">
    <property type="interactions" value="1"/>
</dbReference>
<dbReference type="MINT" id="P39148"/>
<dbReference type="STRING" id="224308.BSU36900"/>
<dbReference type="jPOST" id="P39148"/>
<dbReference type="PaxDb" id="224308-BSU36900"/>
<dbReference type="EnsemblBacteria" id="CAB15707">
    <property type="protein sequence ID" value="CAB15707"/>
    <property type="gene ID" value="BSU_36900"/>
</dbReference>
<dbReference type="GeneID" id="937015"/>
<dbReference type="KEGG" id="bsu:BSU36900"/>
<dbReference type="PATRIC" id="fig|224308.179.peg.3997"/>
<dbReference type="eggNOG" id="COG0112">
    <property type="taxonomic scope" value="Bacteria"/>
</dbReference>
<dbReference type="InParanoid" id="P39148"/>
<dbReference type="OrthoDB" id="9803846at2"/>
<dbReference type="PhylomeDB" id="P39148"/>
<dbReference type="BioCyc" id="BSUB:BSU36900-MONOMER"/>
<dbReference type="UniPathway" id="UPA00193"/>
<dbReference type="UniPathway" id="UPA00288">
    <property type="reaction ID" value="UER01023"/>
</dbReference>
<dbReference type="Proteomes" id="UP000001570">
    <property type="component" value="Chromosome"/>
</dbReference>
<dbReference type="GO" id="GO:0005737">
    <property type="term" value="C:cytoplasm"/>
    <property type="evidence" value="ECO:0000318"/>
    <property type="project" value="GO_Central"/>
</dbReference>
<dbReference type="GO" id="GO:0005829">
    <property type="term" value="C:cytosol"/>
    <property type="evidence" value="ECO:0000318"/>
    <property type="project" value="GO_Central"/>
</dbReference>
<dbReference type="GO" id="GO:0004372">
    <property type="term" value="F:glycine hydroxymethyltransferase activity"/>
    <property type="evidence" value="ECO:0000318"/>
    <property type="project" value="GO_Central"/>
</dbReference>
<dbReference type="GO" id="GO:0030170">
    <property type="term" value="F:pyridoxal phosphate binding"/>
    <property type="evidence" value="ECO:0000318"/>
    <property type="project" value="GO_Central"/>
</dbReference>
<dbReference type="GO" id="GO:0019264">
    <property type="term" value="P:glycine biosynthetic process from serine"/>
    <property type="evidence" value="ECO:0000318"/>
    <property type="project" value="GO_Central"/>
</dbReference>
<dbReference type="GO" id="GO:0035999">
    <property type="term" value="P:tetrahydrofolate interconversion"/>
    <property type="evidence" value="ECO:0007669"/>
    <property type="project" value="UniProtKB-UniRule"/>
</dbReference>
<dbReference type="GO" id="GO:0046653">
    <property type="term" value="P:tetrahydrofolate metabolic process"/>
    <property type="evidence" value="ECO:0000318"/>
    <property type="project" value="GO_Central"/>
</dbReference>
<dbReference type="CDD" id="cd00378">
    <property type="entry name" value="SHMT"/>
    <property type="match status" value="1"/>
</dbReference>
<dbReference type="FunFam" id="3.40.640.10:FF:000001">
    <property type="entry name" value="Serine hydroxymethyltransferase"/>
    <property type="match status" value="1"/>
</dbReference>
<dbReference type="FunFam" id="3.90.1150.10:FF:000003">
    <property type="entry name" value="Serine hydroxymethyltransferase"/>
    <property type="match status" value="1"/>
</dbReference>
<dbReference type="Gene3D" id="3.90.1150.10">
    <property type="entry name" value="Aspartate Aminotransferase, domain 1"/>
    <property type="match status" value="1"/>
</dbReference>
<dbReference type="Gene3D" id="3.40.640.10">
    <property type="entry name" value="Type I PLP-dependent aspartate aminotransferase-like (Major domain)"/>
    <property type="match status" value="1"/>
</dbReference>
<dbReference type="HAMAP" id="MF_00051">
    <property type="entry name" value="SHMT"/>
    <property type="match status" value="1"/>
</dbReference>
<dbReference type="InterPro" id="IPR015424">
    <property type="entry name" value="PyrdxlP-dep_Trfase"/>
</dbReference>
<dbReference type="InterPro" id="IPR015421">
    <property type="entry name" value="PyrdxlP-dep_Trfase_major"/>
</dbReference>
<dbReference type="InterPro" id="IPR015422">
    <property type="entry name" value="PyrdxlP-dep_Trfase_small"/>
</dbReference>
<dbReference type="InterPro" id="IPR001085">
    <property type="entry name" value="Ser_HO-MeTrfase"/>
</dbReference>
<dbReference type="InterPro" id="IPR049943">
    <property type="entry name" value="Ser_HO-MeTrfase-like"/>
</dbReference>
<dbReference type="InterPro" id="IPR019798">
    <property type="entry name" value="Ser_HO-MeTrfase_PLP_BS"/>
</dbReference>
<dbReference type="InterPro" id="IPR039429">
    <property type="entry name" value="SHMT-like_dom"/>
</dbReference>
<dbReference type="NCBIfam" id="NF000586">
    <property type="entry name" value="PRK00011.1"/>
    <property type="match status" value="1"/>
</dbReference>
<dbReference type="PANTHER" id="PTHR11680">
    <property type="entry name" value="SERINE HYDROXYMETHYLTRANSFERASE"/>
    <property type="match status" value="1"/>
</dbReference>
<dbReference type="PANTHER" id="PTHR11680:SF35">
    <property type="entry name" value="SERINE HYDROXYMETHYLTRANSFERASE 1"/>
    <property type="match status" value="1"/>
</dbReference>
<dbReference type="Pfam" id="PF00464">
    <property type="entry name" value="SHMT"/>
    <property type="match status" value="1"/>
</dbReference>
<dbReference type="PIRSF" id="PIRSF000412">
    <property type="entry name" value="SHMT"/>
    <property type="match status" value="1"/>
</dbReference>
<dbReference type="SUPFAM" id="SSF53383">
    <property type="entry name" value="PLP-dependent transferases"/>
    <property type="match status" value="1"/>
</dbReference>
<dbReference type="PROSITE" id="PS00096">
    <property type="entry name" value="SHMT"/>
    <property type="match status" value="1"/>
</dbReference>
<sequence length="415" mass="45490">MKHLPAQDEQVFNAIKNERERQQTKIELIASENFVSEAVMEAQGSVLTNKYAEGYPGKRYYGGCEHVDVVEDIARDRAKEIFGAEHVNVQPHSGAQANMAVYFTILEQGDTVLGMNLSHGGHLTHGSPVNFSGVQYNFVEYGVDKETQYIDYDDVREKALAHKPKLIVAGASAYPRTIDFKKFREIADEVGAYFMVDMAHIAGLVAAGLHPNPVPYADFVTTTTHKTLRGPRGGMILCREEFGKKIDKSIFPGIQGGPLMHVIAAKAVSFGEVLQDDFKTYAQNVISNAKRLAEALTKEGIQLVSGGTDNHLILVDLRSLGLTGKVAEHVLDEIGITSNKNAIPYDPEKPFVTSGIRLGTAAVTSRGFDGDALEEVGAIIALALKNHEDEGKLEEARQRVAALTDKFPLYKELDY</sequence>
<proteinExistence type="evidence at protein level"/>
<gene>
    <name evidence="1" type="primary">glyA</name>
    <name type="synonym">glyC</name>
    <name type="ordered locus">BSU36900</name>
    <name type="ORF">ipc-34d</name>
</gene>
<protein>
    <recommendedName>
        <fullName evidence="1">Serine hydroxymethyltransferase</fullName>
        <shortName evidence="1">SHMT</shortName>
        <shortName evidence="1">Serine methylase</shortName>
        <ecNumber evidence="1">2.1.2.1</ecNumber>
    </recommendedName>
</protein>
<accession>P39148</accession>
<feature type="chain" id="PRO_0000113532" description="Serine hydroxymethyltransferase">
    <location>
        <begin position="1"/>
        <end position="415"/>
    </location>
</feature>
<feature type="binding site" evidence="1">
    <location>
        <position position="117"/>
    </location>
    <ligand>
        <name>(6S)-5,6,7,8-tetrahydrofolate</name>
        <dbReference type="ChEBI" id="CHEBI:57453"/>
    </ligand>
</feature>
<feature type="binding site" evidence="1">
    <location>
        <begin position="121"/>
        <end position="123"/>
    </location>
    <ligand>
        <name>(6S)-5,6,7,8-tetrahydrofolate</name>
        <dbReference type="ChEBI" id="CHEBI:57453"/>
    </ligand>
</feature>
<feature type="binding site" evidence="1">
    <location>
        <position position="241"/>
    </location>
    <ligand>
        <name>(6S)-5,6,7,8-tetrahydrofolate</name>
        <dbReference type="ChEBI" id="CHEBI:57453"/>
    </ligand>
</feature>
<feature type="site" description="Plays an important role in substrate specificity" evidence="1">
    <location>
        <position position="225"/>
    </location>
</feature>
<feature type="modified residue" description="N6-(pyridoxal phosphate)lysine" evidence="1">
    <location>
        <position position="226"/>
    </location>
</feature>